<organism>
    <name type="scientific">Physarum polycephalum</name>
    <name type="common">Slime mold</name>
    <dbReference type="NCBI Taxonomy" id="5791"/>
    <lineage>
        <taxon>Eukaryota</taxon>
        <taxon>Amoebozoa</taxon>
        <taxon>Evosea</taxon>
        <taxon>Eumycetozoa</taxon>
        <taxon>Myxogastria</taxon>
        <taxon>Myxogastromycetidae</taxon>
        <taxon>Physariida</taxon>
        <taxon>Physaraceae</taxon>
        <taxon>Physarum</taxon>
    </lineage>
</organism>
<protein>
    <recommendedName>
        <fullName>Probable cyclin-dependent kinases regulatory subunit</fullName>
    </recommendedName>
</protein>
<reference key="1">
    <citation type="journal article" date="1995" name="FEBS Lett.">
        <title>Oligomerization state in solution of the cell cycle regulators p13suc1 from the fission yeast and p9cksphy from the myxomycete Physarum, two members of the cks family.</title>
        <authorList>
            <person name="Birck C."/>
            <person name="Raynaud-Messina B."/>
            <person name="Samama J.-P."/>
        </authorList>
    </citation>
    <scope>NUCLEOTIDE SEQUENCE</scope>
    <scope>SUBUNIT</scope>
</reference>
<accession>P55933</accession>
<sequence length="84" mass="9936">MPRDTIQYSEKYYDDKFEYRHVILPPDVAKEIPKNRLLSEGEWRGLGVQQSQGWVHYALHRPEPHILLFRREVPMPAASLSHNP</sequence>
<keyword id="KW-0131">Cell cycle</keyword>
<keyword id="KW-0132">Cell division</keyword>
<evidence type="ECO:0000250" key="1"/>
<evidence type="ECO:0000269" key="2">
    <source>
    </source>
</evidence>
<evidence type="ECO:0000305" key="3"/>
<name>CKS1_PHYPO</name>
<proteinExistence type="evidence at protein level"/>
<dbReference type="PIR" id="S65484">
    <property type="entry name" value="S65484"/>
</dbReference>
<dbReference type="SMR" id="P55933"/>
<dbReference type="GO" id="GO:0016538">
    <property type="term" value="F:cyclin-dependent protein serine/threonine kinase regulator activity"/>
    <property type="evidence" value="ECO:0007669"/>
    <property type="project" value="InterPro"/>
</dbReference>
<dbReference type="GO" id="GO:0051301">
    <property type="term" value="P:cell division"/>
    <property type="evidence" value="ECO:0007669"/>
    <property type="project" value="UniProtKB-KW"/>
</dbReference>
<dbReference type="FunFam" id="3.30.170.10:FF:000003">
    <property type="entry name" value="Cyclin-dependent kinases regulatory subunit"/>
    <property type="match status" value="1"/>
</dbReference>
<dbReference type="Gene3D" id="3.30.170.10">
    <property type="entry name" value="Cyclin-dependent kinase, regulatory subunit"/>
    <property type="match status" value="1"/>
</dbReference>
<dbReference type="InterPro" id="IPR000789">
    <property type="entry name" value="Cyclin-dep_kinase_reg-sub"/>
</dbReference>
<dbReference type="InterPro" id="IPR036858">
    <property type="entry name" value="Cyclin-dep_kinase_reg-sub_sf"/>
</dbReference>
<dbReference type="PANTHER" id="PTHR23415">
    <property type="entry name" value="CYCLIN-DEPENDENT KINASES REGULATORY SUBUNIT/60S RIBOSOME SUBUNIT BIOGENESIS PROTEIN NIP7"/>
    <property type="match status" value="1"/>
</dbReference>
<dbReference type="Pfam" id="PF01111">
    <property type="entry name" value="CKS"/>
    <property type="match status" value="1"/>
</dbReference>
<dbReference type="PRINTS" id="PR00296">
    <property type="entry name" value="CYCLINKINASE"/>
</dbReference>
<dbReference type="SMART" id="SM01084">
    <property type="entry name" value="CKS"/>
    <property type="match status" value="1"/>
</dbReference>
<dbReference type="SUPFAM" id="SSF55637">
    <property type="entry name" value="Cell cycle regulatory proteins"/>
    <property type="match status" value="1"/>
</dbReference>
<dbReference type="PROSITE" id="PS00944">
    <property type="entry name" value="CKS_1"/>
    <property type="match status" value="1"/>
</dbReference>
<dbReference type="PROSITE" id="PS00945">
    <property type="entry name" value="CKS_2"/>
    <property type="match status" value="1"/>
</dbReference>
<feature type="chain" id="PRO_0000206241" description="Probable cyclin-dependent kinases regulatory subunit">
    <location>
        <begin position="1"/>
        <end position="84"/>
    </location>
</feature>
<comment type="function">
    <text evidence="1">Binds to the catalytic subunit of the cyclin dependent kinases and is essential for their biological function.</text>
</comment>
<comment type="subunit">
    <text evidence="2">Monomer in solution; may form a homohexamer that can probably bind six kinase subunits.</text>
</comment>
<comment type="similarity">
    <text evidence="3">Belongs to the CKS family.</text>
</comment>